<name>NANT_ECO24</name>
<comment type="function">
    <text evidence="1">Catalyzes the proton-dependent transport of sialic acid.</text>
</comment>
<comment type="catalytic activity">
    <reaction evidence="1">
        <text>N-acetylneuraminate(in) + H(+)(in) = N-acetylneuraminate(out) + H(+)(out)</text>
        <dbReference type="Rhea" id="RHEA:28987"/>
        <dbReference type="ChEBI" id="CHEBI:15378"/>
        <dbReference type="ChEBI" id="CHEBI:35418"/>
    </reaction>
</comment>
<comment type="subcellular location">
    <subcellularLocation>
        <location evidence="1">Cell inner membrane</location>
        <topology evidence="1">Multi-pass membrane protein</topology>
    </subcellularLocation>
</comment>
<comment type="similarity">
    <text evidence="1">Belongs to the major facilitator superfamily. Sialate:H(+) symporter (SHS) (TC 2.A.1.12) family.</text>
</comment>
<feature type="chain" id="PRO_1000214039" description="Sialic acid transporter NanT">
    <location>
        <begin position="1"/>
        <end position="496"/>
    </location>
</feature>
<feature type="transmembrane region" description="Helical" evidence="1">
    <location>
        <begin position="22"/>
        <end position="42"/>
    </location>
</feature>
<feature type="transmembrane region" description="Helical" evidence="1">
    <location>
        <begin position="58"/>
        <end position="78"/>
    </location>
</feature>
<feature type="transmembrane region" description="Helical" evidence="1">
    <location>
        <begin position="92"/>
        <end position="112"/>
    </location>
</feature>
<feature type="transmembrane region" description="Helical" evidence="1">
    <location>
        <begin position="116"/>
        <end position="136"/>
    </location>
</feature>
<feature type="transmembrane region" description="Helical" evidence="1">
    <location>
        <begin position="148"/>
        <end position="168"/>
    </location>
</feature>
<feature type="transmembrane region" description="Helical" evidence="1">
    <location>
        <begin position="170"/>
        <end position="190"/>
    </location>
</feature>
<feature type="transmembrane region" description="Helical" evidence="1">
    <location>
        <begin position="224"/>
        <end position="244"/>
    </location>
</feature>
<feature type="transmembrane region" description="Helical" evidence="1">
    <location>
        <begin position="247"/>
        <end position="267"/>
    </location>
</feature>
<feature type="transmembrane region" description="Helical" evidence="1">
    <location>
        <begin position="278"/>
        <end position="298"/>
    </location>
</feature>
<feature type="transmembrane region" description="Helical" evidence="1">
    <location>
        <begin position="313"/>
        <end position="333"/>
    </location>
</feature>
<feature type="transmembrane region" description="Helical" evidence="1">
    <location>
        <begin position="353"/>
        <end position="375"/>
    </location>
</feature>
<feature type="transmembrane region" description="Helical" evidence="1">
    <location>
        <begin position="406"/>
        <end position="426"/>
    </location>
</feature>
<feature type="transmembrane region" description="Helical" evidence="1">
    <location>
        <begin position="431"/>
        <end position="451"/>
    </location>
</feature>
<sequence length="496" mass="53568">MSTTTQNIPWYRHLNRAQWRAFSAAWLGYLLDGFDFVLIALVLTEVQGEFGLTTVQAASLISAAFISRWFGGLMLGAMGDRYGRRLAMVTSIVLFSAGTLACGFAPGYITMFIARLVIGMGMAGEYGSSATYVIESWPKHLRNKASGFLISGFSVGAVVAAQVYSLVVPVWGWRALFFIGILPIIFALWLRKNIPEAEDWKEKHGGKAPVRTMVDILYRGEHRIANIVMTLAAATALWFCFAGNLQNAAIVAVLGLLCAAIFISFMVQSTGKRWPTGVMLMVVVLFAFLYSWPIQALLPTYLKTDLAYDPHTVANVLFFSGFGAAVGCCVGGFLGDWLGTRKAYVCSLLASQLLIIPVFAIGGANVWVLGLLLFFQQMLGQGIAGILPKLIGGYFDTDQRAAGLGFTYNVGALGGALAPIIGALIAQRLDLGTALASLSFSLTFVVILLIGLDMPSRVQRWLRPEALRTHDAIDGKPFSGAVPFGSAKNDLVKTKS</sequence>
<proteinExistence type="inferred from homology"/>
<gene>
    <name evidence="1" type="primary">nanT</name>
    <name type="ordered locus">EcE24377A_3706</name>
</gene>
<reference key="1">
    <citation type="journal article" date="2008" name="J. Bacteriol.">
        <title>The pangenome structure of Escherichia coli: comparative genomic analysis of E. coli commensal and pathogenic isolates.</title>
        <authorList>
            <person name="Rasko D.A."/>
            <person name="Rosovitz M.J."/>
            <person name="Myers G.S.A."/>
            <person name="Mongodin E.F."/>
            <person name="Fricke W.F."/>
            <person name="Gajer P."/>
            <person name="Crabtree J."/>
            <person name="Sebaihia M."/>
            <person name="Thomson N.R."/>
            <person name="Chaudhuri R."/>
            <person name="Henderson I.R."/>
            <person name="Sperandio V."/>
            <person name="Ravel J."/>
        </authorList>
    </citation>
    <scope>NUCLEOTIDE SEQUENCE [LARGE SCALE GENOMIC DNA]</scope>
    <source>
        <strain>E24377A / ETEC</strain>
    </source>
</reference>
<accession>A7ZSB7</accession>
<dbReference type="EMBL" id="CP000800">
    <property type="protein sequence ID" value="ABV19413.1"/>
    <property type="molecule type" value="Genomic_DNA"/>
</dbReference>
<dbReference type="RefSeq" id="WP_000108473.1">
    <property type="nucleotide sequence ID" value="NC_009801.1"/>
</dbReference>
<dbReference type="SMR" id="A7ZSB7"/>
<dbReference type="KEGG" id="ecw:EcE24377A_3706"/>
<dbReference type="HOGENOM" id="CLU_001265_46_8_6"/>
<dbReference type="Proteomes" id="UP000001122">
    <property type="component" value="Chromosome"/>
</dbReference>
<dbReference type="GO" id="GO:0005886">
    <property type="term" value="C:plasma membrane"/>
    <property type="evidence" value="ECO:0007669"/>
    <property type="project" value="UniProtKB-SubCell"/>
</dbReference>
<dbReference type="GO" id="GO:0046943">
    <property type="term" value="F:carboxylic acid transmembrane transporter activity"/>
    <property type="evidence" value="ECO:0007669"/>
    <property type="project" value="TreeGrafter"/>
</dbReference>
<dbReference type="GO" id="GO:0015538">
    <property type="term" value="F:sialic acid:proton symporter activity"/>
    <property type="evidence" value="ECO:0007669"/>
    <property type="project" value="UniProtKB-UniRule"/>
</dbReference>
<dbReference type="CDD" id="cd17316">
    <property type="entry name" value="MFS_SV2_like"/>
    <property type="match status" value="1"/>
</dbReference>
<dbReference type="FunFam" id="1.20.1250.20:FF:000027">
    <property type="entry name" value="Sialic acid transporter NanT"/>
    <property type="match status" value="1"/>
</dbReference>
<dbReference type="FunFam" id="1.20.1250.20:FF:000038">
    <property type="entry name" value="Sialic acid transporter NanT"/>
    <property type="match status" value="1"/>
</dbReference>
<dbReference type="Gene3D" id="1.20.1250.20">
    <property type="entry name" value="MFS general substrate transporter like domains"/>
    <property type="match status" value="2"/>
</dbReference>
<dbReference type="HAMAP" id="MF_01238">
    <property type="entry name" value="MFS_NanT"/>
    <property type="match status" value="1"/>
</dbReference>
<dbReference type="InterPro" id="IPR011701">
    <property type="entry name" value="MFS"/>
</dbReference>
<dbReference type="InterPro" id="IPR020846">
    <property type="entry name" value="MFS_dom"/>
</dbReference>
<dbReference type="InterPro" id="IPR036259">
    <property type="entry name" value="MFS_trans_sf"/>
</dbReference>
<dbReference type="InterPro" id="IPR004742">
    <property type="entry name" value="SA_transporter"/>
</dbReference>
<dbReference type="NCBIfam" id="TIGR00891">
    <property type="entry name" value="2A0112"/>
    <property type="match status" value="1"/>
</dbReference>
<dbReference type="NCBIfam" id="NF003024">
    <property type="entry name" value="PRK03893.1"/>
    <property type="match status" value="1"/>
</dbReference>
<dbReference type="PANTHER" id="PTHR23508">
    <property type="entry name" value="CARBOXYLIC ACID TRANSPORTER PROTEIN HOMOLOG"/>
    <property type="match status" value="1"/>
</dbReference>
<dbReference type="PANTHER" id="PTHR23508:SF3">
    <property type="entry name" value="SIALIC ACID TRANSPORTER NANT"/>
    <property type="match status" value="1"/>
</dbReference>
<dbReference type="Pfam" id="PF07690">
    <property type="entry name" value="MFS_1"/>
    <property type="match status" value="1"/>
</dbReference>
<dbReference type="SUPFAM" id="SSF103473">
    <property type="entry name" value="MFS general substrate transporter"/>
    <property type="match status" value="1"/>
</dbReference>
<dbReference type="PROSITE" id="PS50850">
    <property type="entry name" value="MFS"/>
    <property type="match status" value="1"/>
</dbReference>
<organism>
    <name type="scientific">Escherichia coli O139:H28 (strain E24377A / ETEC)</name>
    <dbReference type="NCBI Taxonomy" id="331111"/>
    <lineage>
        <taxon>Bacteria</taxon>
        <taxon>Pseudomonadati</taxon>
        <taxon>Pseudomonadota</taxon>
        <taxon>Gammaproteobacteria</taxon>
        <taxon>Enterobacterales</taxon>
        <taxon>Enterobacteriaceae</taxon>
        <taxon>Escherichia</taxon>
    </lineage>
</organism>
<protein>
    <recommendedName>
        <fullName evidence="1">Sialic acid transporter NanT</fullName>
    </recommendedName>
    <alternativeName>
        <fullName evidence="1">Sialic acid permease</fullName>
    </alternativeName>
    <alternativeName>
        <fullName evidence="1">Sialic acid/H(+) symporter</fullName>
    </alternativeName>
</protein>
<keyword id="KW-0997">Cell inner membrane</keyword>
<keyword id="KW-1003">Cell membrane</keyword>
<keyword id="KW-0472">Membrane</keyword>
<keyword id="KW-1185">Reference proteome</keyword>
<keyword id="KW-0762">Sugar transport</keyword>
<keyword id="KW-0812">Transmembrane</keyword>
<keyword id="KW-1133">Transmembrane helix</keyword>
<keyword id="KW-0813">Transport</keyword>
<evidence type="ECO:0000255" key="1">
    <source>
        <dbReference type="HAMAP-Rule" id="MF_01238"/>
    </source>
</evidence>